<organism>
    <name type="scientific">Catharanthus roseus</name>
    <name type="common">Madagascar periwinkle</name>
    <name type="synonym">Vinca rosea</name>
    <dbReference type="NCBI Taxonomy" id="4058"/>
    <lineage>
        <taxon>Eukaryota</taxon>
        <taxon>Viridiplantae</taxon>
        <taxon>Streptophyta</taxon>
        <taxon>Embryophyta</taxon>
        <taxon>Tracheophyta</taxon>
        <taxon>Spermatophyta</taxon>
        <taxon>Magnoliopsida</taxon>
        <taxon>eudicotyledons</taxon>
        <taxon>Gunneridae</taxon>
        <taxon>Pentapetalae</taxon>
        <taxon>asterids</taxon>
        <taxon>lamiids</taxon>
        <taxon>Gentianales</taxon>
        <taxon>Apocynaceae</taxon>
        <taxon>Rauvolfioideae</taxon>
        <taxon>Vinceae</taxon>
        <taxon>Catharanthinae</taxon>
        <taxon>Catharanthus</taxon>
    </lineage>
</organism>
<accession>A0A8X8M501</accession>
<accession>W5U8K0</accession>
<name>TMT4_CATRO</name>
<evidence type="ECO:0000250" key="1">
    <source>
        <dbReference type="UniProtKB" id="W5U2K2"/>
    </source>
</evidence>
<evidence type="ECO:0000255" key="2"/>
<evidence type="ECO:0000255" key="3">
    <source>
        <dbReference type="PROSITE-ProRule" id="PRU00914"/>
    </source>
</evidence>
<evidence type="ECO:0000269" key="4">
    <source>
    </source>
</evidence>
<evidence type="ECO:0000303" key="5">
    <source>
    </source>
</evidence>
<evidence type="ECO:0000303" key="6">
    <source>
    </source>
</evidence>
<evidence type="ECO:0000305" key="7"/>
<sequence>MAEKQQAVAEFYDNSTGAWEVFFGDHLHDGFYDPGTTATIPASRAAVVRMIDEALRFANVSTDPAKKPRNMLDVGCGIGGTCLYVAKKYDIQCTGITISPEQVKCAQGFAAAQGLENKATFDCGDALNMPYKDGTFDVVFTIQCIEHIQDKEKFIREMVRVAAPGAAIVIVSYGHRNLSPGEESLKPEEKKTLKKICDNIVLSWLCSSADYVRWLTPLPVQDIKTADWTQNIQPFYPLLFKEAFTWRGFTSLLMKGGWSAIKVVLAVKVMAKAADDGLLKFMAVTCKKSK</sequence>
<proteinExistence type="evidence at protein level"/>
<keyword id="KW-0017">Alkaloid metabolism</keyword>
<keyword id="KW-0472">Membrane</keyword>
<keyword id="KW-0489">Methyltransferase</keyword>
<keyword id="KW-0949">S-adenosyl-L-methionine</keyword>
<keyword id="KW-0808">Transferase</keyword>
<keyword id="KW-0926">Vacuole</keyword>
<protein>
    <recommendedName>
        <fullName evidence="7">Picrinine-N-methytransferase TMT4</fullName>
        <shortName evidence="7">CrPiNMT2</shortName>
        <ecNumber evidence="4">2.1.1.-</ecNumber>
    </recommendedName>
    <alternativeName>
        <fullName evidence="5 6">Gamma-tocopherol-like methyltransferase 4</fullName>
        <shortName evidence="6">CrTMT4</shortName>
    </alternativeName>
</protein>
<gene>
    <name evidence="6" type="primary">TMT4</name>
    <name evidence="5" type="synonym">Cr7756</name>
</gene>
<reference key="1">
    <citation type="journal article" date="2016" name="Plant Physiol.">
        <title>A picrinine N-methyltransferase belongs to a new family of gamma-tocopherol-like methyltransferases found in medicinal plants that make biologically active monoterpenoid indole alkaloids.</title>
        <authorList>
            <person name="Levac D."/>
            <person name="Cazares P."/>
            <person name="Yu F."/>
            <person name="De Luca V."/>
        </authorList>
    </citation>
    <scope>NUCLEOTIDE SEQUENCE [MRNA]</scope>
    <source>
        <strain>cv. Little Delicata</strain>
        <tissue>Root</tissue>
    </source>
</reference>
<reference key="2">
    <citation type="journal article" date="2022" name="Plant Cell Physiol.">
        <title>Tonoplast and peroxisome targeting of gamma-tocopherol N-methyltransferase homologs involved in the synthesis of monoterpene indole alkaloids.</title>
        <authorList>
            <person name="Koudounas K."/>
            <person name="Guirimand G."/>
            <person name="Hoyos L.F.R."/>
            <person name="Carqueijeiro I."/>
            <person name="Cruz P.L."/>
            <person name="Stander E."/>
            <person name="Kulagina N."/>
            <person name="Perrin J."/>
            <person name="Oudin A."/>
            <person name="Besseau S."/>
            <person name="Lanoue A."/>
            <person name="Atehortua L."/>
            <person name="St-Pierre B."/>
            <person name="Giglioli-Guivarc'h N."/>
            <person name="Papon N."/>
            <person name="O'Connor S.E."/>
            <person name="Courdavault V."/>
        </authorList>
    </citation>
    <scope>NUCLEOTIDE SEQUENCE [MRNA]</scope>
    <scope>FUNCTION</scope>
    <scope>CATALYTIC ACTIVITY</scope>
    <scope>PATHWAY</scope>
    <scope>SUBCELLULAR LOCATION</scope>
    <scope>GENE FAMILY</scope>
</reference>
<comment type="function">
    <text evidence="4">S-adenosyl-L-methionine-dependent N-methyltransferase involved in the biosynthesis of biologically active monoterpenoid indole alkaloids (MIAs) natural products including vindoline (PubMed:35166361). Catalyzes the conversion of picrinine to N-methylpicrinine (ervincine) (PubMed:35166361).</text>
</comment>
<comment type="catalytic activity">
    <reaction evidence="4">
        <text>picrinine + S-adenosyl-L-methionine = ervincine + S-adenosyl-L-homocysteine + H(+)</text>
        <dbReference type="Rhea" id="RHEA:76143"/>
        <dbReference type="ChEBI" id="CHEBI:15378"/>
        <dbReference type="ChEBI" id="CHEBI:57856"/>
        <dbReference type="ChEBI" id="CHEBI:59789"/>
        <dbReference type="ChEBI" id="CHEBI:70505"/>
        <dbReference type="ChEBI" id="CHEBI:194555"/>
    </reaction>
    <physiologicalReaction direction="left-to-right" evidence="4">
        <dbReference type="Rhea" id="RHEA:76144"/>
    </physiologicalReaction>
</comment>
<comment type="pathway">
    <text evidence="4">Alkaloid biosynthesis; vindoline biosynthesis.</text>
</comment>
<comment type="subunit">
    <text evidence="1">Homodimer.</text>
</comment>
<comment type="subcellular location">
    <subcellularLocation>
        <location evidence="4">Vacuole membrane</location>
    </subcellularLocation>
</comment>
<comment type="similarity">
    <text evidence="3">Belongs to the class I-like SAM-binding methyltransferase superfamily. gTMT family.</text>
</comment>
<feature type="chain" id="PRO_0000458250" description="Picrinine-N-methytransferase TMT4">
    <location>
        <begin position="1"/>
        <end position="290"/>
    </location>
</feature>
<feature type="region of interest" description="SAM motif I" evidence="3">
    <location>
        <begin position="71"/>
        <end position="80"/>
    </location>
</feature>
<feature type="region of interest" description="SAM motif II" evidence="3">
    <location>
        <begin position="134"/>
        <end position="142"/>
    </location>
</feature>
<feature type="region of interest" description="SAM motif III" evidence="3">
    <location>
        <begin position="161"/>
        <end position="170"/>
    </location>
</feature>
<feature type="short sequence motif" description="Vacuolar targeting signal" evidence="2">
    <location>
        <begin position="133"/>
        <end position="139"/>
    </location>
</feature>
<feature type="sequence conflict" description="In Ref. 1; AHH33093." evidence="7" ref="1">
    <original>M</original>
    <variation>E</variation>
    <location>
        <position position="1"/>
    </location>
</feature>
<feature type="sequence conflict" description="In Ref. 1; AHH33093." evidence="7" ref="1">
    <original>KSK</original>
    <variation>E</variation>
    <location>
        <begin position="288"/>
        <end position="290"/>
    </location>
</feature>
<dbReference type="EC" id="2.1.1.-" evidence="4"/>
<dbReference type="EMBL" id="KF934425">
    <property type="protein sequence ID" value="AHH33093.1"/>
    <property type="molecule type" value="mRNA"/>
</dbReference>
<dbReference type="EMBL" id="MZ367710">
    <property type="protein sequence ID" value="URY10634.1"/>
    <property type="molecule type" value="mRNA"/>
</dbReference>
<dbReference type="SMR" id="A0A8X8M501"/>
<dbReference type="OrthoDB" id="8300214at2759"/>
<dbReference type="UniPathway" id="UPA00365"/>
<dbReference type="GO" id="GO:0009705">
    <property type="term" value="C:plant-type vacuole membrane"/>
    <property type="evidence" value="ECO:0000314"/>
    <property type="project" value="UniProtKB"/>
</dbReference>
<dbReference type="GO" id="GO:0008757">
    <property type="term" value="F:S-adenosylmethionine-dependent methyltransferase activity"/>
    <property type="evidence" value="ECO:0007669"/>
    <property type="project" value="InterPro"/>
</dbReference>
<dbReference type="GO" id="GO:0009820">
    <property type="term" value="P:alkaloid metabolic process"/>
    <property type="evidence" value="ECO:0007669"/>
    <property type="project" value="UniProtKB-KW"/>
</dbReference>
<dbReference type="GO" id="GO:0032259">
    <property type="term" value="P:methylation"/>
    <property type="evidence" value="ECO:0007669"/>
    <property type="project" value="UniProtKB-KW"/>
</dbReference>
<dbReference type="CDD" id="cd02440">
    <property type="entry name" value="AdoMet_MTases"/>
    <property type="match status" value="1"/>
</dbReference>
<dbReference type="Gene3D" id="3.40.50.150">
    <property type="entry name" value="Vaccinia Virus protein VP39"/>
    <property type="match status" value="1"/>
</dbReference>
<dbReference type="InterPro" id="IPR050447">
    <property type="entry name" value="Erg6_SMT_methyltransf"/>
</dbReference>
<dbReference type="InterPro" id="IPR013216">
    <property type="entry name" value="Methyltransf_11"/>
</dbReference>
<dbReference type="InterPro" id="IPR025774">
    <property type="entry name" value="MTs_g-TMT"/>
</dbReference>
<dbReference type="InterPro" id="IPR029063">
    <property type="entry name" value="SAM-dependent_MTases_sf"/>
</dbReference>
<dbReference type="PANTHER" id="PTHR44068:SF11">
    <property type="entry name" value="GERANYL DIPHOSPHATE 2-C-METHYLTRANSFERASE"/>
    <property type="match status" value="1"/>
</dbReference>
<dbReference type="PANTHER" id="PTHR44068">
    <property type="entry name" value="ZGC:194242"/>
    <property type="match status" value="1"/>
</dbReference>
<dbReference type="Pfam" id="PF08241">
    <property type="entry name" value="Methyltransf_11"/>
    <property type="match status" value="1"/>
</dbReference>
<dbReference type="SUPFAM" id="SSF53335">
    <property type="entry name" value="S-adenosyl-L-methionine-dependent methyltransferases"/>
    <property type="match status" value="1"/>
</dbReference>
<dbReference type="PROSITE" id="PS51581">
    <property type="entry name" value="SAM_GTMT"/>
    <property type="match status" value="1"/>
</dbReference>